<accession>C1CGA5</accession>
<evidence type="ECO:0000255" key="1">
    <source>
        <dbReference type="HAMAP-Rule" id="MF_00258"/>
    </source>
</evidence>
<organism>
    <name type="scientific">Streptococcus pneumoniae (strain JJA)</name>
    <dbReference type="NCBI Taxonomy" id="488222"/>
    <lineage>
        <taxon>Bacteria</taxon>
        <taxon>Bacillati</taxon>
        <taxon>Bacillota</taxon>
        <taxon>Bacilli</taxon>
        <taxon>Lactobacillales</taxon>
        <taxon>Streptococcaceae</taxon>
        <taxon>Streptococcus</taxon>
    </lineage>
</organism>
<protein>
    <recommendedName>
        <fullName evidence="1">Glutamate racemase</fullName>
        <ecNumber evidence="1">5.1.1.3</ecNumber>
    </recommendedName>
</protein>
<keyword id="KW-0133">Cell shape</keyword>
<keyword id="KW-0961">Cell wall biogenesis/degradation</keyword>
<keyword id="KW-0413">Isomerase</keyword>
<keyword id="KW-0573">Peptidoglycan synthesis</keyword>
<gene>
    <name evidence="1" type="primary">murI</name>
    <name type="ordered locus">SPJ_1786</name>
</gene>
<feature type="chain" id="PRO_1000125623" description="Glutamate racemase">
    <location>
        <begin position="1"/>
        <end position="264"/>
    </location>
</feature>
<feature type="active site" description="Proton donor/acceptor" evidence="1">
    <location>
        <position position="73"/>
    </location>
</feature>
<feature type="active site" description="Proton donor/acceptor" evidence="1">
    <location>
        <position position="183"/>
    </location>
</feature>
<feature type="binding site" evidence="1">
    <location>
        <begin position="10"/>
        <end position="11"/>
    </location>
    <ligand>
        <name>substrate</name>
    </ligand>
</feature>
<feature type="binding site" evidence="1">
    <location>
        <begin position="42"/>
        <end position="43"/>
    </location>
    <ligand>
        <name>substrate</name>
    </ligand>
</feature>
<feature type="binding site" evidence="1">
    <location>
        <begin position="74"/>
        <end position="75"/>
    </location>
    <ligand>
        <name>substrate</name>
    </ligand>
</feature>
<feature type="binding site" evidence="1">
    <location>
        <begin position="184"/>
        <end position="185"/>
    </location>
    <ligand>
        <name>substrate</name>
    </ligand>
</feature>
<sequence>MDNRPIGFLDSGVGGLTVVRELMRQLPHEEIVYIGDSARAPYGPRPAEQIREYTWQLVNFLLTKDVKMIVIACNTATAVVWEEIKAQLDIPVLGVILPGASAAIKSSQGGKIGVIGTPMTVQSDIYRQKIHDLDPDLQVESLACPKFAPLVESGALSTSVTKKVVYETLRPLVGKVDSLILGCTHYPLLRPIIQNVMGPKVQLIDSGAECVRDISVLLNYFEINRGRDAGPLHHRFYTTASSQSFAQIGEEWLEKEIHVEHVEL</sequence>
<reference key="1">
    <citation type="journal article" date="2010" name="Genome Biol.">
        <title>Structure and dynamics of the pan-genome of Streptococcus pneumoniae and closely related species.</title>
        <authorList>
            <person name="Donati C."/>
            <person name="Hiller N.L."/>
            <person name="Tettelin H."/>
            <person name="Muzzi A."/>
            <person name="Croucher N.J."/>
            <person name="Angiuoli S.V."/>
            <person name="Oggioni M."/>
            <person name="Dunning Hotopp J.C."/>
            <person name="Hu F.Z."/>
            <person name="Riley D.R."/>
            <person name="Covacci A."/>
            <person name="Mitchell T.J."/>
            <person name="Bentley S.D."/>
            <person name="Kilian M."/>
            <person name="Ehrlich G.D."/>
            <person name="Rappuoli R."/>
            <person name="Moxon E.R."/>
            <person name="Masignani V."/>
        </authorList>
    </citation>
    <scope>NUCLEOTIDE SEQUENCE [LARGE SCALE GENOMIC DNA]</scope>
    <source>
        <strain>JJA</strain>
    </source>
</reference>
<name>MURI_STRZJ</name>
<comment type="function">
    <text evidence="1">Provides the (R)-glutamate required for cell wall biosynthesis.</text>
</comment>
<comment type="catalytic activity">
    <reaction evidence="1">
        <text>L-glutamate = D-glutamate</text>
        <dbReference type="Rhea" id="RHEA:12813"/>
        <dbReference type="ChEBI" id="CHEBI:29985"/>
        <dbReference type="ChEBI" id="CHEBI:29986"/>
        <dbReference type="EC" id="5.1.1.3"/>
    </reaction>
</comment>
<comment type="pathway">
    <text evidence="1">Cell wall biogenesis; peptidoglycan biosynthesis.</text>
</comment>
<comment type="similarity">
    <text evidence="1">Belongs to the aspartate/glutamate racemases family.</text>
</comment>
<proteinExistence type="inferred from homology"/>
<dbReference type="EC" id="5.1.1.3" evidence="1"/>
<dbReference type="EMBL" id="CP000919">
    <property type="protein sequence ID" value="ACO19330.1"/>
    <property type="molecule type" value="Genomic_DNA"/>
</dbReference>
<dbReference type="SMR" id="C1CGA5"/>
<dbReference type="KEGG" id="sjj:SPJ_1786"/>
<dbReference type="HOGENOM" id="CLU_052344_0_2_9"/>
<dbReference type="UniPathway" id="UPA00219"/>
<dbReference type="Proteomes" id="UP000002206">
    <property type="component" value="Chromosome"/>
</dbReference>
<dbReference type="GO" id="GO:0008881">
    <property type="term" value="F:glutamate racemase activity"/>
    <property type="evidence" value="ECO:0007669"/>
    <property type="project" value="UniProtKB-UniRule"/>
</dbReference>
<dbReference type="GO" id="GO:0071555">
    <property type="term" value="P:cell wall organization"/>
    <property type="evidence" value="ECO:0007669"/>
    <property type="project" value="UniProtKB-KW"/>
</dbReference>
<dbReference type="GO" id="GO:0009252">
    <property type="term" value="P:peptidoglycan biosynthetic process"/>
    <property type="evidence" value="ECO:0007669"/>
    <property type="project" value="UniProtKB-UniRule"/>
</dbReference>
<dbReference type="GO" id="GO:0008360">
    <property type="term" value="P:regulation of cell shape"/>
    <property type="evidence" value="ECO:0007669"/>
    <property type="project" value="UniProtKB-KW"/>
</dbReference>
<dbReference type="FunFam" id="3.40.50.1860:FF:000002">
    <property type="entry name" value="Glutamate racemase"/>
    <property type="match status" value="1"/>
</dbReference>
<dbReference type="Gene3D" id="3.40.50.1860">
    <property type="match status" value="2"/>
</dbReference>
<dbReference type="HAMAP" id="MF_00258">
    <property type="entry name" value="Glu_racemase"/>
    <property type="match status" value="1"/>
</dbReference>
<dbReference type="InterPro" id="IPR015942">
    <property type="entry name" value="Asp/Glu/hydantoin_racemase"/>
</dbReference>
<dbReference type="InterPro" id="IPR001920">
    <property type="entry name" value="Asp/Glu_race"/>
</dbReference>
<dbReference type="InterPro" id="IPR018187">
    <property type="entry name" value="Asp/Glu_racemase_AS_1"/>
</dbReference>
<dbReference type="InterPro" id="IPR033134">
    <property type="entry name" value="Asp/Glu_racemase_AS_2"/>
</dbReference>
<dbReference type="InterPro" id="IPR004391">
    <property type="entry name" value="Glu_race"/>
</dbReference>
<dbReference type="NCBIfam" id="TIGR00067">
    <property type="entry name" value="glut_race"/>
    <property type="match status" value="1"/>
</dbReference>
<dbReference type="NCBIfam" id="NF002035">
    <property type="entry name" value="PRK00865.1-3"/>
    <property type="match status" value="1"/>
</dbReference>
<dbReference type="PANTHER" id="PTHR21198">
    <property type="entry name" value="GLUTAMATE RACEMASE"/>
    <property type="match status" value="1"/>
</dbReference>
<dbReference type="PANTHER" id="PTHR21198:SF2">
    <property type="entry name" value="GLUTAMATE RACEMASE"/>
    <property type="match status" value="1"/>
</dbReference>
<dbReference type="Pfam" id="PF01177">
    <property type="entry name" value="Asp_Glu_race"/>
    <property type="match status" value="1"/>
</dbReference>
<dbReference type="SUPFAM" id="SSF53681">
    <property type="entry name" value="Aspartate/glutamate racemase"/>
    <property type="match status" value="2"/>
</dbReference>
<dbReference type="PROSITE" id="PS00923">
    <property type="entry name" value="ASP_GLU_RACEMASE_1"/>
    <property type="match status" value="1"/>
</dbReference>
<dbReference type="PROSITE" id="PS00924">
    <property type="entry name" value="ASP_GLU_RACEMASE_2"/>
    <property type="match status" value="1"/>
</dbReference>